<organism>
    <name type="scientific">Yersinia pseudotuberculosis serotype O:3 (strain YPIII)</name>
    <dbReference type="NCBI Taxonomy" id="502800"/>
    <lineage>
        <taxon>Bacteria</taxon>
        <taxon>Pseudomonadati</taxon>
        <taxon>Pseudomonadota</taxon>
        <taxon>Gammaproteobacteria</taxon>
        <taxon>Enterobacterales</taxon>
        <taxon>Yersiniaceae</taxon>
        <taxon>Yersinia</taxon>
    </lineage>
</organism>
<protein>
    <recommendedName>
        <fullName evidence="1">Oxygen-dependent coproporphyrinogen-III oxidase</fullName>
        <shortName evidence="1">CPO</shortName>
        <shortName evidence="1">Coprogen oxidase</shortName>
        <shortName evidence="1">Coproporphyrinogenase</shortName>
        <ecNumber evidence="1">1.3.3.3</ecNumber>
    </recommendedName>
</protein>
<proteinExistence type="inferred from homology"/>
<comment type="function">
    <text evidence="1">Involved in the heme biosynthesis. Catalyzes the aerobic oxidative decarboxylation of propionate groups of rings A and B of coproporphyrinogen-III to yield the vinyl groups in protoporphyrinogen-IX.</text>
</comment>
<comment type="catalytic activity">
    <reaction evidence="1">
        <text>coproporphyrinogen III + O2 + 2 H(+) = protoporphyrinogen IX + 2 CO2 + 2 H2O</text>
        <dbReference type="Rhea" id="RHEA:18257"/>
        <dbReference type="ChEBI" id="CHEBI:15377"/>
        <dbReference type="ChEBI" id="CHEBI:15378"/>
        <dbReference type="ChEBI" id="CHEBI:15379"/>
        <dbReference type="ChEBI" id="CHEBI:16526"/>
        <dbReference type="ChEBI" id="CHEBI:57307"/>
        <dbReference type="ChEBI" id="CHEBI:57309"/>
        <dbReference type="EC" id="1.3.3.3"/>
    </reaction>
</comment>
<comment type="cofactor">
    <cofactor evidence="1">
        <name>a divalent metal cation</name>
        <dbReference type="ChEBI" id="CHEBI:60240"/>
    </cofactor>
</comment>
<comment type="pathway">
    <text evidence="1">Porphyrin-containing compound metabolism; protoporphyrin-IX biosynthesis; protoporphyrinogen-IX from coproporphyrinogen-III (O2 route): step 1/1.</text>
</comment>
<comment type="subunit">
    <text evidence="1">Homodimer.</text>
</comment>
<comment type="subcellular location">
    <subcellularLocation>
        <location evidence="1">Cytoplasm</location>
    </subcellularLocation>
</comment>
<comment type="similarity">
    <text evidence="1">Belongs to the aerobic coproporphyrinogen-III oxidase family.</text>
</comment>
<keyword id="KW-0963">Cytoplasm</keyword>
<keyword id="KW-0350">Heme biosynthesis</keyword>
<keyword id="KW-0479">Metal-binding</keyword>
<keyword id="KW-0560">Oxidoreductase</keyword>
<keyword id="KW-0627">Porphyrin biosynthesis</keyword>
<name>HEM6_YERPY</name>
<gene>
    <name evidence="1" type="primary">hemF</name>
    <name type="ordered locus">YPK_1393</name>
</gene>
<evidence type="ECO:0000255" key="1">
    <source>
        <dbReference type="HAMAP-Rule" id="MF_00333"/>
    </source>
</evidence>
<accession>B1JSJ6</accession>
<reference key="1">
    <citation type="submission" date="2008-02" db="EMBL/GenBank/DDBJ databases">
        <title>Complete sequence of Yersinia pseudotuberculosis YPIII.</title>
        <authorList>
            <consortium name="US DOE Joint Genome Institute"/>
            <person name="Copeland A."/>
            <person name="Lucas S."/>
            <person name="Lapidus A."/>
            <person name="Glavina del Rio T."/>
            <person name="Dalin E."/>
            <person name="Tice H."/>
            <person name="Bruce D."/>
            <person name="Goodwin L."/>
            <person name="Pitluck S."/>
            <person name="Munk A.C."/>
            <person name="Brettin T."/>
            <person name="Detter J.C."/>
            <person name="Han C."/>
            <person name="Tapia R."/>
            <person name="Schmutz J."/>
            <person name="Larimer F."/>
            <person name="Land M."/>
            <person name="Hauser L."/>
            <person name="Challacombe J.F."/>
            <person name="Green L."/>
            <person name="Lindler L.E."/>
            <person name="Nikolich M.P."/>
            <person name="Richardson P."/>
        </authorList>
    </citation>
    <scope>NUCLEOTIDE SEQUENCE [LARGE SCALE GENOMIC DNA]</scope>
    <source>
        <strain>YPIII</strain>
    </source>
</reference>
<dbReference type="EC" id="1.3.3.3" evidence="1"/>
<dbReference type="EMBL" id="CP000950">
    <property type="protein sequence ID" value="ACA67687.1"/>
    <property type="molecule type" value="Genomic_DNA"/>
</dbReference>
<dbReference type="RefSeq" id="WP_002208526.1">
    <property type="nucleotide sequence ID" value="NZ_CP009792.1"/>
</dbReference>
<dbReference type="SMR" id="B1JSJ6"/>
<dbReference type="GeneID" id="57975670"/>
<dbReference type="KEGG" id="ypy:YPK_1393"/>
<dbReference type="PATRIC" id="fig|502800.11.peg.2030"/>
<dbReference type="UniPathway" id="UPA00251">
    <property type="reaction ID" value="UER00322"/>
</dbReference>
<dbReference type="GO" id="GO:0005737">
    <property type="term" value="C:cytoplasm"/>
    <property type="evidence" value="ECO:0007669"/>
    <property type="project" value="UniProtKB-SubCell"/>
</dbReference>
<dbReference type="GO" id="GO:0004109">
    <property type="term" value="F:coproporphyrinogen oxidase activity"/>
    <property type="evidence" value="ECO:0007669"/>
    <property type="project" value="UniProtKB-UniRule"/>
</dbReference>
<dbReference type="GO" id="GO:0046872">
    <property type="term" value="F:metal ion binding"/>
    <property type="evidence" value="ECO:0007669"/>
    <property type="project" value="UniProtKB-KW"/>
</dbReference>
<dbReference type="GO" id="GO:0042803">
    <property type="term" value="F:protein homodimerization activity"/>
    <property type="evidence" value="ECO:0000250"/>
    <property type="project" value="UniProtKB"/>
</dbReference>
<dbReference type="GO" id="GO:0006782">
    <property type="term" value="P:protoporphyrinogen IX biosynthetic process"/>
    <property type="evidence" value="ECO:0007669"/>
    <property type="project" value="UniProtKB-UniRule"/>
</dbReference>
<dbReference type="FunFam" id="3.40.1500.10:FF:000001">
    <property type="entry name" value="Oxygen-dependent coproporphyrinogen-III oxidase"/>
    <property type="match status" value="1"/>
</dbReference>
<dbReference type="Gene3D" id="3.40.1500.10">
    <property type="entry name" value="Coproporphyrinogen III oxidase, aerobic"/>
    <property type="match status" value="1"/>
</dbReference>
<dbReference type="HAMAP" id="MF_00333">
    <property type="entry name" value="Coprogen_oxidas"/>
    <property type="match status" value="1"/>
</dbReference>
<dbReference type="InterPro" id="IPR001260">
    <property type="entry name" value="Coprogen_oxidase_aer"/>
</dbReference>
<dbReference type="InterPro" id="IPR036406">
    <property type="entry name" value="Coprogen_oxidase_aer_sf"/>
</dbReference>
<dbReference type="InterPro" id="IPR018375">
    <property type="entry name" value="Coprogen_oxidase_CS"/>
</dbReference>
<dbReference type="NCBIfam" id="NF003727">
    <property type="entry name" value="PRK05330.1"/>
    <property type="match status" value="1"/>
</dbReference>
<dbReference type="PANTHER" id="PTHR10755">
    <property type="entry name" value="COPROPORPHYRINOGEN III OXIDASE, MITOCHONDRIAL"/>
    <property type="match status" value="1"/>
</dbReference>
<dbReference type="PANTHER" id="PTHR10755:SF0">
    <property type="entry name" value="OXYGEN-DEPENDENT COPROPORPHYRINOGEN-III OXIDASE, MITOCHONDRIAL"/>
    <property type="match status" value="1"/>
</dbReference>
<dbReference type="Pfam" id="PF01218">
    <property type="entry name" value="Coprogen_oxidas"/>
    <property type="match status" value="1"/>
</dbReference>
<dbReference type="PIRSF" id="PIRSF000166">
    <property type="entry name" value="Coproporphyri_ox"/>
    <property type="match status" value="1"/>
</dbReference>
<dbReference type="PRINTS" id="PR00073">
    <property type="entry name" value="COPRGNOXDASE"/>
</dbReference>
<dbReference type="SUPFAM" id="SSF102886">
    <property type="entry name" value="Coproporphyrinogen III oxidase"/>
    <property type="match status" value="1"/>
</dbReference>
<dbReference type="PROSITE" id="PS01021">
    <property type="entry name" value="COPROGEN_OXIDASE"/>
    <property type="match status" value="1"/>
</dbReference>
<feature type="chain" id="PRO_1000119838" description="Oxygen-dependent coproporphyrinogen-III oxidase">
    <location>
        <begin position="1"/>
        <end position="309"/>
    </location>
</feature>
<feature type="region of interest" description="Important for dimerization" evidence="1">
    <location>
        <begin position="242"/>
        <end position="277"/>
    </location>
</feature>
<feature type="active site" description="Proton donor" evidence="1">
    <location>
        <position position="108"/>
    </location>
</feature>
<feature type="binding site" evidence="1">
    <location>
        <position position="94"/>
    </location>
    <ligand>
        <name>substrate</name>
    </ligand>
</feature>
<feature type="binding site" evidence="1">
    <location>
        <position position="98"/>
    </location>
    <ligand>
        <name>a divalent metal cation</name>
        <dbReference type="ChEBI" id="CHEBI:60240"/>
    </ligand>
</feature>
<feature type="binding site" evidence="1">
    <location>
        <position position="108"/>
    </location>
    <ligand>
        <name>a divalent metal cation</name>
        <dbReference type="ChEBI" id="CHEBI:60240"/>
    </ligand>
</feature>
<feature type="binding site" evidence="1">
    <location>
        <begin position="110"/>
        <end position="112"/>
    </location>
    <ligand>
        <name>substrate</name>
    </ligand>
</feature>
<feature type="binding site" evidence="1">
    <location>
        <position position="147"/>
    </location>
    <ligand>
        <name>a divalent metal cation</name>
        <dbReference type="ChEBI" id="CHEBI:60240"/>
    </ligand>
</feature>
<feature type="binding site" evidence="1">
    <location>
        <position position="177"/>
    </location>
    <ligand>
        <name>a divalent metal cation</name>
        <dbReference type="ChEBI" id="CHEBI:60240"/>
    </ligand>
</feature>
<feature type="binding site" evidence="1">
    <location>
        <begin position="260"/>
        <end position="262"/>
    </location>
    <ligand>
        <name>substrate</name>
    </ligand>
</feature>
<feature type="site" description="Important for dimerization" evidence="1">
    <location>
        <position position="177"/>
    </location>
</feature>
<sequence length="309" mass="35005">MNSPDIALIKTYLLTLQDNICAALAQADGHAEFTEECWVREEGGGGRSRVLVNGAVFEQAGVNFSHVSGAMLPASATAHRPELAGRSFQALGVSLVIHPLNPYLPTSHANVRFFIAEKPGEDAVWWFGGGFDLTPYYGFEEDAIHWHQVAHSLCQPFGEQIYPRYKKWCDDYFYIKHRQEARGIGGLFFDDLNSPDFMTCFNFTQAVGDGFLAAYMPIVARRKALGWGDRERQFQLYRRGRYVEFNLVWDRGTLFGLQTGGRTESILMSLPPLVRWEYNYQPEADSAEAALYRDFLPVKDWLAIKGETH</sequence>